<evidence type="ECO:0000255" key="1">
    <source>
        <dbReference type="HAMAP-Rule" id="MF_00109"/>
    </source>
</evidence>
<comment type="function">
    <text evidence="1">Catalyzes the specific phosphorylation of the 3-hydroxyl group of shikimic acid using ATP as a cosubstrate.</text>
</comment>
<comment type="catalytic activity">
    <reaction evidence="1">
        <text>shikimate + ATP = 3-phosphoshikimate + ADP + H(+)</text>
        <dbReference type="Rhea" id="RHEA:13121"/>
        <dbReference type="ChEBI" id="CHEBI:15378"/>
        <dbReference type="ChEBI" id="CHEBI:30616"/>
        <dbReference type="ChEBI" id="CHEBI:36208"/>
        <dbReference type="ChEBI" id="CHEBI:145989"/>
        <dbReference type="ChEBI" id="CHEBI:456216"/>
        <dbReference type="EC" id="2.7.1.71"/>
    </reaction>
</comment>
<comment type="cofactor">
    <cofactor evidence="1">
        <name>Mg(2+)</name>
        <dbReference type="ChEBI" id="CHEBI:18420"/>
    </cofactor>
    <text evidence="1">Binds 1 Mg(2+) ion per subunit.</text>
</comment>
<comment type="pathway">
    <text evidence="1">Metabolic intermediate biosynthesis; chorismate biosynthesis; chorismate from D-erythrose 4-phosphate and phosphoenolpyruvate: step 5/7.</text>
</comment>
<comment type="subunit">
    <text evidence="1">Monomer.</text>
</comment>
<comment type="subcellular location">
    <subcellularLocation>
        <location evidence="1">Cytoplasm</location>
    </subcellularLocation>
</comment>
<comment type="similarity">
    <text evidence="1">Belongs to the shikimate kinase family.</text>
</comment>
<name>AROK_STRCO</name>
<feature type="chain" id="PRO_0000237940" description="Shikimate kinase">
    <location>
        <begin position="1"/>
        <end position="171"/>
    </location>
</feature>
<feature type="binding site" evidence="1">
    <location>
        <begin position="13"/>
        <end position="18"/>
    </location>
    <ligand>
        <name>ATP</name>
        <dbReference type="ChEBI" id="CHEBI:30616"/>
    </ligand>
</feature>
<feature type="binding site" evidence="1">
    <location>
        <position position="17"/>
    </location>
    <ligand>
        <name>Mg(2+)</name>
        <dbReference type="ChEBI" id="CHEBI:18420"/>
    </ligand>
</feature>
<feature type="binding site" evidence="1">
    <location>
        <position position="35"/>
    </location>
    <ligand>
        <name>substrate</name>
    </ligand>
</feature>
<feature type="binding site" evidence="1">
    <location>
        <position position="59"/>
    </location>
    <ligand>
        <name>substrate</name>
    </ligand>
</feature>
<feature type="binding site" evidence="1">
    <location>
        <position position="81"/>
    </location>
    <ligand>
        <name>substrate</name>
    </ligand>
</feature>
<feature type="binding site" evidence="1">
    <location>
        <position position="118"/>
    </location>
    <ligand>
        <name>ATP</name>
        <dbReference type="ChEBI" id="CHEBI:30616"/>
    </ligand>
</feature>
<feature type="binding site" evidence="1">
    <location>
        <position position="136"/>
    </location>
    <ligand>
        <name>substrate</name>
    </ligand>
</feature>
<feature type="binding site" evidence="1">
    <location>
        <position position="153"/>
    </location>
    <ligand>
        <name>ATP</name>
        <dbReference type="ChEBI" id="CHEBI:30616"/>
    </ligand>
</feature>
<protein>
    <recommendedName>
        <fullName evidence="1">Shikimate kinase</fullName>
        <shortName evidence="1">SK</shortName>
        <ecNumber evidence="1">2.7.1.71</ecNumber>
    </recommendedName>
</protein>
<gene>
    <name evidence="1" type="primary">aroK</name>
    <name type="ordered locus">SCO1495</name>
    <name type="ORF">SC9C5.19c</name>
</gene>
<dbReference type="EC" id="2.7.1.71" evidence="1"/>
<dbReference type="EMBL" id="AL939109">
    <property type="protein sequence ID" value="CAB93375.1"/>
    <property type="molecule type" value="Genomic_DNA"/>
</dbReference>
<dbReference type="RefSeq" id="NP_625775.1">
    <property type="nucleotide sequence ID" value="NC_003888.3"/>
</dbReference>
<dbReference type="RefSeq" id="WP_011027814.1">
    <property type="nucleotide sequence ID" value="NZ_VNID01000021.1"/>
</dbReference>
<dbReference type="SMR" id="Q9KXQ5"/>
<dbReference type="FunCoup" id="Q9KXQ5">
    <property type="interactions" value="166"/>
</dbReference>
<dbReference type="STRING" id="100226.gene:17759081"/>
<dbReference type="PaxDb" id="100226-SCO1495"/>
<dbReference type="KEGG" id="sco:SCO1495"/>
<dbReference type="PATRIC" id="fig|100226.15.peg.1504"/>
<dbReference type="eggNOG" id="COG0703">
    <property type="taxonomic scope" value="Bacteria"/>
</dbReference>
<dbReference type="HOGENOM" id="CLU_057607_3_3_11"/>
<dbReference type="InParanoid" id="Q9KXQ5"/>
<dbReference type="OrthoDB" id="9800332at2"/>
<dbReference type="PhylomeDB" id="Q9KXQ5"/>
<dbReference type="UniPathway" id="UPA00053">
    <property type="reaction ID" value="UER00088"/>
</dbReference>
<dbReference type="Proteomes" id="UP000001973">
    <property type="component" value="Chromosome"/>
</dbReference>
<dbReference type="GO" id="GO:0005829">
    <property type="term" value="C:cytosol"/>
    <property type="evidence" value="ECO:0000318"/>
    <property type="project" value="GO_Central"/>
</dbReference>
<dbReference type="GO" id="GO:0005524">
    <property type="term" value="F:ATP binding"/>
    <property type="evidence" value="ECO:0007669"/>
    <property type="project" value="UniProtKB-UniRule"/>
</dbReference>
<dbReference type="GO" id="GO:0000287">
    <property type="term" value="F:magnesium ion binding"/>
    <property type="evidence" value="ECO:0007669"/>
    <property type="project" value="UniProtKB-UniRule"/>
</dbReference>
<dbReference type="GO" id="GO:0004765">
    <property type="term" value="F:shikimate kinase activity"/>
    <property type="evidence" value="ECO:0000318"/>
    <property type="project" value="GO_Central"/>
</dbReference>
<dbReference type="GO" id="GO:0008652">
    <property type="term" value="P:amino acid biosynthetic process"/>
    <property type="evidence" value="ECO:0007669"/>
    <property type="project" value="UniProtKB-KW"/>
</dbReference>
<dbReference type="GO" id="GO:0009073">
    <property type="term" value="P:aromatic amino acid family biosynthetic process"/>
    <property type="evidence" value="ECO:0007669"/>
    <property type="project" value="UniProtKB-KW"/>
</dbReference>
<dbReference type="GO" id="GO:0009423">
    <property type="term" value="P:chorismate biosynthetic process"/>
    <property type="evidence" value="ECO:0007669"/>
    <property type="project" value="UniProtKB-UniRule"/>
</dbReference>
<dbReference type="CDD" id="cd00464">
    <property type="entry name" value="SK"/>
    <property type="match status" value="1"/>
</dbReference>
<dbReference type="FunFam" id="3.40.50.300:FF:003339">
    <property type="entry name" value="Shikimate kinase"/>
    <property type="match status" value="1"/>
</dbReference>
<dbReference type="Gene3D" id="3.40.50.300">
    <property type="entry name" value="P-loop containing nucleotide triphosphate hydrolases"/>
    <property type="match status" value="1"/>
</dbReference>
<dbReference type="HAMAP" id="MF_00109">
    <property type="entry name" value="Shikimate_kinase"/>
    <property type="match status" value="1"/>
</dbReference>
<dbReference type="InterPro" id="IPR027417">
    <property type="entry name" value="P-loop_NTPase"/>
</dbReference>
<dbReference type="InterPro" id="IPR031322">
    <property type="entry name" value="Shikimate/glucono_kinase"/>
</dbReference>
<dbReference type="InterPro" id="IPR000623">
    <property type="entry name" value="Shikimate_kinase/TSH1"/>
</dbReference>
<dbReference type="InterPro" id="IPR023000">
    <property type="entry name" value="Shikimate_kinase_CS"/>
</dbReference>
<dbReference type="PANTHER" id="PTHR21087">
    <property type="entry name" value="SHIKIMATE KINASE"/>
    <property type="match status" value="1"/>
</dbReference>
<dbReference type="PANTHER" id="PTHR21087:SF16">
    <property type="entry name" value="SHIKIMATE KINASE 1, CHLOROPLASTIC"/>
    <property type="match status" value="1"/>
</dbReference>
<dbReference type="Pfam" id="PF01202">
    <property type="entry name" value="SKI"/>
    <property type="match status" value="1"/>
</dbReference>
<dbReference type="PRINTS" id="PR01100">
    <property type="entry name" value="SHIKIMTKNASE"/>
</dbReference>
<dbReference type="SUPFAM" id="SSF52540">
    <property type="entry name" value="P-loop containing nucleoside triphosphate hydrolases"/>
    <property type="match status" value="1"/>
</dbReference>
<dbReference type="PROSITE" id="PS01128">
    <property type="entry name" value="SHIKIMATE_KINASE"/>
    <property type="match status" value="1"/>
</dbReference>
<proteinExistence type="inferred from homology"/>
<organism>
    <name type="scientific">Streptomyces coelicolor (strain ATCC BAA-471 / A3(2) / M145)</name>
    <dbReference type="NCBI Taxonomy" id="100226"/>
    <lineage>
        <taxon>Bacteria</taxon>
        <taxon>Bacillati</taxon>
        <taxon>Actinomycetota</taxon>
        <taxon>Actinomycetes</taxon>
        <taxon>Kitasatosporales</taxon>
        <taxon>Streptomycetaceae</taxon>
        <taxon>Streptomyces</taxon>
        <taxon>Streptomyces albidoflavus group</taxon>
    </lineage>
</organism>
<keyword id="KW-0028">Amino-acid biosynthesis</keyword>
<keyword id="KW-0057">Aromatic amino acid biosynthesis</keyword>
<keyword id="KW-0067">ATP-binding</keyword>
<keyword id="KW-0963">Cytoplasm</keyword>
<keyword id="KW-0418">Kinase</keyword>
<keyword id="KW-0460">Magnesium</keyword>
<keyword id="KW-0479">Metal-binding</keyword>
<keyword id="KW-0547">Nucleotide-binding</keyword>
<keyword id="KW-1185">Reference proteome</keyword>
<keyword id="KW-0808">Transferase</keyword>
<reference key="1">
    <citation type="journal article" date="2002" name="Nature">
        <title>Complete genome sequence of the model actinomycete Streptomyces coelicolor A3(2).</title>
        <authorList>
            <person name="Bentley S.D."/>
            <person name="Chater K.F."/>
            <person name="Cerdeno-Tarraga A.-M."/>
            <person name="Challis G.L."/>
            <person name="Thomson N.R."/>
            <person name="James K.D."/>
            <person name="Harris D.E."/>
            <person name="Quail M.A."/>
            <person name="Kieser H."/>
            <person name="Harper D."/>
            <person name="Bateman A."/>
            <person name="Brown S."/>
            <person name="Chandra G."/>
            <person name="Chen C.W."/>
            <person name="Collins M."/>
            <person name="Cronin A."/>
            <person name="Fraser A."/>
            <person name="Goble A."/>
            <person name="Hidalgo J."/>
            <person name="Hornsby T."/>
            <person name="Howarth S."/>
            <person name="Huang C.-H."/>
            <person name="Kieser T."/>
            <person name="Larke L."/>
            <person name="Murphy L.D."/>
            <person name="Oliver K."/>
            <person name="O'Neil S."/>
            <person name="Rabbinowitsch E."/>
            <person name="Rajandream M.A."/>
            <person name="Rutherford K.M."/>
            <person name="Rutter S."/>
            <person name="Seeger K."/>
            <person name="Saunders D."/>
            <person name="Sharp S."/>
            <person name="Squares R."/>
            <person name="Squares S."/>
            <person name="Taylor K."/>
            <person name="Warren T."/>
            <person name="Wietzorrek A."/>
            <person name="Woodward J.R."/>
            <person name="Barrell B.G."/>
            <person name="Parkhill J."/>
            <person name="Hopwood D.A."/>
        </authorList>
    </citation>
    <scope>NUCLEOTIDE SEQUENCE [LARGE SCALE GENOMIC DNA]</scope>
    <source>
        <strain>ATCC BAA-471 / A3(2) / M145</strain>
    </source>
</reference>
<sequence>MSAPLIVLVGPMGVGKSTVGQLLAERLGTGYRDTDEDIVTAQGRAIAEIFVDEGEAAFRTLEKEAVRTALAEHEGVLALGGGAILDADTRALLAGQRVVYLSMDVEEAVKRTGLNAARPLLAVNPRKQWRELMEARRHLYEDVATAVVATDGRTPEEVTQAALDAVELKEA</sequence>
<accession>Q9KXQ5</accession>